<evidence type="ECO:0000255" key="1">
    <source>
        <dbReference type="HAMAP-Rule" id="MF_00270"/>
    </source>
</evidence>
<evidence type="ECO:0000305" key="2"/>
<organism>
    <name type="scientific">Geobacillus thermodenitrificans (strain NG80-2)</name>
    <dbReference type="NCBI Taxonomy" id="420246"/>
    <lineage>
        <taxon>Bacteria</taxon>
        <taxon>Bacillati</taxon>
        <taxon>Bacillota</taxon>
        <taxon>Bacilli</taxon>
        <taxon>Bacillales</taxon>
        <taxon>Anoxybacillaceae</taxon>
        <taxon>Geobacillus</taxon>
    </lineage>
</organism>
<proteinExistence type="inferred from homology"/>
<sequence length="78" mass="8969">MAGRKGGRGKRRKVCYFTANNITHIDYKDVDLLKKFISERGKILPRRVTGTSAKYQRKLTVAIKRARQMALLPYVADE</sequence>
<protein>
    <recommendedName>
        <fullName evidence="1">Small ribosomal subunit protein bS18</fullName>
    </recommendedName>
    <alternativeName>
        <fullName evidence="2">30S ribosomal protein S18</fullName>
    </alternativeName>
</protein>
<reference key="1">
    <citation type="journal article" date="2007" name="Proc. Natl. Acad. Sci. U.S.A.">
        <title>Genome and proteome of long-chain alkane degrading Geobacillus thermodenitrificans NG80-2 isolated from a deep-subsurface oil reservoir.</title>
        <authorList>
            <person name="Feng L."/>
            <person name="Wang W."/>
            <person name="Cheng J."/>
            <person name="Ren Y."/>
            <person name="Zhao G."/>
            <person name="Gao C."/>
            <person name="Tang Y."/>
            <person name="Liu X."/>
            <person name="Han W."/>
            <person name="Peng X."/>
            <person name="Liu R."/>
            <person name="Wang L."/>
        </authorList>
    </citation>
    <scope>NUCLEOTIDE SEQUENCE [LARGE SCALE GENOMIC DNA]</scope>
    <source>
        <strain>NG80-2</strain>
    </source>
</reference>
<keyword id="KW-0687">Ribonucleoprotein</keyword>
<keyword id="KW-0689">Ribosomal protein</keyword>
<keyword id="KW-0694">RNA-binding</keyword>
<keyword id="KW-0699">rRNA-binding</keyword>
<accession>A4ITV8</accession>
<feature type="chain" id="PRO_0000345479" description="Small ribosomal subunit protein bS18">
    <location>
        <begin position="1"/>
        <end position="78"/>
    </location>
</feature>
<comment type="function">
    <text evidence="1">Binds as a heterodimer with protein bS6 to the central domain of the 16S rRNA, where it helps stabilize the platform of the 30S subunit.</text>
</comment>
<comment type="subunit">
    <text evidence="1">Part of the 30S ribosomal subunit. Forms a tight heterodimer with protein bS6.</text>
</comment>
<comment type="similarity">
    <text evidence="1">Belongs to the bacterial ribosomal protein bS18 family.</text>
</comment>
<comment type="sequence caution" evidence="2">
    <conflict type="erroneous initiation">
        <sequence resource="EMBL-CDS" id="ABO68762"/>
    </conflict>
</comment>
<gene>
    <name evidence="1" type="primary">rpsR</name>
    <name type="ordered locus">GTNG_3425</name>
</gene>
<name>RS18_GEOTN</name>
<dbReference type="EMBL" id="CP000557">
    <property type="protein sequence ID" value="ABO68762.1"/>
    <property type="status" value="ALT_INIT"/>
    <property type="molecule type" value="Genomic_DNA"/>
</dbReference>
<dbReference type="RefSeq" id="WP_008880812.1">
    <property type="nucleotide sequence ID" value="NC_009328.1"/>
</dbReference>
<dbReference type="SMR" id="A4ITV8"/>
<dbReference type="GeneID" id="89612828"/>
<dbReference type="KEGG" id="gtn:GTNG_3425"/>
<dbReference type="eggNOG" id="COG0238">
    <property type="taxonomic scope" value="Bacteria"/>
</dbReference>
<dbReference type="HOGENOM" id="CLU_148710_2_2_9"/>
<dbReference type="Proteomes" id="UP000001578">
    <property type="component" value="Chromosome"/>
</dbReference>
<dbReference type="GO" id="GO:0022627">
    <property type="term" value="C:cytosolic small ribosomal subunit"/>
    <property type="evidence" value="ECO:0007669"/>
    <property type="project" value="TreeGrafter"/>
</dbReference>
<dbReference type="GO" id="GO:0070181">
    <property type="term" value="F:small ribosomal subunit rRNA binding"/>
    <property type="evidence" value="ECO:0007669"/>
    <property type="project" value="TreeGrafter"/>
</dbReference>
<dbReference type="GO" id="GO:0003735">
    <property type="term" value="F:structural constituent of ribosome"/>
    <property type="evidence" value="ECO:0007669"/>
    <property type="project" value="InterPro"/>
</dbReference>
<dbReference type="GO" id="GO:0006412">
    <property type="term" value="P:translation"/>
    <property type="evidence" value="ECO:0007669"/>
    <property type="project" value="UniProtKB-UniRule"/>
</dbReference>
<dbReference type="FunFam" id="4.10.640.10:FF:000003">
    <property type="entry name" value="30S ribosomal protein S18"/>
    <property type="match status" value="1"/>
</dbReference>
<dbReference type="Gene3D" id="4.10.640.10">
    <property type="entry name" value="Ribosomal protein S18"/>
    <property type="match status" value="1"/>
</dbReference>
<dbReference type="HAMAP" id="MF_00270">
    <property type="entry name" value="Ribosomal_bS18"/>
    <property type="match status" value="1"/>
</dbReference>
<dbReference type="InterPro" id="IPR001648">
    <property type="entry name" value="Ribosomal_bS18"/>
</dbReference>
<dbReference type="InterPro" id="IPR018275">
    <property type="entry name" value="Ribosomal_bS18_CS"/>
</dbReference>
<dbReference type="InterPro" id="IPR036870">
    <property type="entry name" value="Ribosomal_bS18_sf"/>
</dbReference>
<dbReference type="NCBIfam" id="TIGR00165">
    <property type="entry name" value="S18"/>
    <property type="match status" value="1"/>
</dbReference>
<dbReference type="PANTHER" id="PTHR13479">
    <property type="entry name" value="30S RIBOSOMAL PROTEIN S18"/>
    <property type="match status" value="1"/>
</dbReference>
<dbReference type="PANTHER" id="PTHR13479:SF40">
    <property type="entry name" value="SMALL RIBOSOMAL SUBUNIT PROTEIN BS18M"/>
    <property type="match status" value="1"/>
</dbReference>
<dbReference type="Pfam" id="PF01084">
    <property type="entry name" value="Ribosomal_S18"/>
    <property type="match status" value="1"/>
</dbReference>
<dbReference type="PRINTS" id="PR00974">
    <property type="entry name" value="RIBOSOMALS18"/>
</dbReference>
<dbReference type="SUPFAM" id="SSF46911">
    <property type="entry name" value="Ribosomal protein S18"/>
    <property type="match status" value="1"/>
</dbReference>
<dbReference type="PROSITE" id="PS00057">
    <property type="entry name" value="RIBOSOMAL_S18"/>
    <property type="match status" value="1"/>
</dbReference>